<protein>
    <recommendedName>
        <fullName>UDP-glycosyltransferase 74B1</fullName>
    </recommendedName>
    <alternativeName>
        <fullName>N-hydroxythioamide S-beta-glucosyltransferase</fullName>
        <ecNumber evidence="3">2.4.1.195</ecNumber>
    </alternativeName>
    <alternativeName>
        <fullName>Thiohydroximate S-glucosyltransferase</fullName>
    </alternativeName>
</protein>
<evidence type="ECO:0000250" key="1">
    <source>
        <dbReference type="UniProtKB" id="A0A0A1HA03"/>
    </source>
</evidence>
<evidence type="ECO:0000250" key="2">
    <source>
        <dbReference type="UniProtKB" id="P51094"/>
    </source>
</evidence>
<evidence type="ECO:0000269" key="3">
    <source>
    </source>
</evidence>
<evidence type="ECO:0000303" key="4">
    <source ref="5"/>
</evidence>
<evidence type="ECO:0000305" key="5"/>
<reference key="1">
    <citation type="journal article" date="2014" name="Plant J.">
        <title>The plant glycosyltransferase clone collection for functional genomics.</title>
        <authorList>
            <person name="Lao J."/>
            <person name="Oikawa A."/>
            <person name="Bromley J.R."/>
            <person name="McInerney P."/>
            <person name="Suttangkakul A."/>
            <person name="Smith-Moritz A.M."/>
            <person name="Plahar H."/>
            <person name="Chiu T.-Y."/>
            <person name="Gonzalez Fernandez-Nino S.M.G."/>
            <person name="Ebert B."/>
            <person name="Yang F."/>
            <person name="Christiansen K.M."/>
            <person name="Hansen S.F."/>
            <person name="Stonebloom S."/>
            <person name="Adams P.D."/>
            <person name="Ronald P.C."/>
            <person name="Hillson N.J."/>
            <person name="Hadi M.Z."/>
            <person name="Vega-Sanchez M.E."/>
            <person name="Loque D."/>
            <person name="Scheller H.V."/>
            <person name="Heazlewood J.L."/>
        </authorList>
    </citation>
    <scope>NUCLEOTIDE SEQUENCE [MRNA]</scope>
    <source>
        <strain>cv. Columbia</strain>
    </source>
</reference>
<reference key="2">
    <citation type="journal article" date="2000" name="Nature">
        <title>Sequence and analysis of chromosome 1 of the plant Arabidopsis thaliana.</title>
        <authorList>
            <person name="Theologis A."/>
            <person name="Ecker J.R."/>
            <person name="Palm C.J."/>
            <person name="Federspiel N.A."/>
            <person name="Kaul S."/>
            <person name="White O."/>
            <person name="Alonso J."/>
            <person name="Altafi H."/>
            <person name="Araujo R."/>
            <person name="Bowman C.L."/>
            <person name="Brooks S.Y."/>
            <person name="Buehler E."/>
            <person name="Chan A."/>
            <person name="Chao Q."/>
            <person name="Chen H."/>
            <person name="Cheuk R.F."/>
            <person name="Chin C.W."/>
            <person name="Chung M.K."/>
            <person name="Conn L."/>
            <person name="Conway A.B."/>
            <person name="Conway A.R."/>
            <person name="Creasy T.H."/>
            <person name="Dewar K."/>
            <person name="Dunn P."/>
            <person name="Etgu P."/>
            <person name="Feldblyum T.V."/>
            <person name="Feng J.-D."/>
            <person name="Fong B."/>
            <person name="Fujii C.Y."/>
            <person name="Gill J.E."/>
            <person name="Goldsmith A.D."/>
            <person name="Haas B."/>
            <person name="Hansen N.F."/>
            <person name="Hughes B."/>
            <person name="Huizar L."/>
            <person name="Hunter J.L."/>
            <person name="Jenkins J."/>
            <person name="Johnson-Hopson C."/>
            <person name="Khan S."/>
            <person name="Khaykin E."/>
            <person name="Kim C.J."/>
            <person name="Koo H.L."/>
            <person name="Kremenetskaia I."/>
            <person name="Kurtz D.B."/>
            <person name="Kwan A."/>
            <person name="Lam B."/>
            <person name="Langin-Hooper S."/>
            <person name="Lee A."/>
            <person name="Lee J.M."/>
            <person name="Lenz C.A."/>
            <person name="Li J.H."/>
            <person name="Li Y.-P."/>
            <person name="Lin X."/>
            <person name="Liu S.X."/>
            <person name="Liu Z.A."/>
            <person name="Luros J.S."/>
            <person name="Maiti R."/>
            <person name="Marziali A."/>
            <person name="Militscher J."/>
            <person name="Miranda M."/>
            <person name="Nguyen M."/>
            <person name="Nierman W.C."/>
            <person name="Osborne B.I."/>
            <person name="Pai G."/>
            <person name="Peterson J."/>
            <person name="Pham P.K."/>
            <person name="Rizzo M."/>
            <person name="Rooney T."/>
            <person name="Rowley D."/>
            <person name="Sakano H."/>
            <person name="Salzberg S.L."/>
            <person name="Schwartz J.R."/>
            <person name="Shinn P."/>
            <person name="Southwick A.M."/>
            <person name="Sun H."/>
            <person name="Tallon L.J."/>
            <person name="Tambunga G."/>
            <person name="Toriumi M.J."/>
            <person name="Town C.D."/>
            <person name="Utterback T."/>
            <person name="Van Aken S."/>
            <person name="Vaysberg M."/>
            <person name="Vysotskaia V.S."/>
            <person name="Walker M."/>
            <person name="Wu D."/>
            <person name="Yu G."/>
            <person name="Fraser C.M."/>
            <person name="Venter J.C."/>
            <person name="Davis R.W."/>
        </authorList>
    </citation>
    <scope>NUCLEOTIDE SEQUENCE [LARGE SCALE GENOMIC DNA]</scope>
    <source>
        <strain>cv. Columbia</strain>
    </source>
</reference>
<reference key="3">
    <citation type="journal article" date="2017" name="Plant J.">
        <title>Araport11: a complete reannotation of the Arabidopsis thaliana reference genome.</title>
        <authorList>
            <person name="Cheng C.Y."/>
            <person name="Krishnakumar V."/>
            <person name="Chan A.P."/>
            <person name="Thibaud-Nissen F."/>
            <person name="Schobel S."/>
            <person name="Town C.D."/>
        </authorList>
    </citation>
    <scope>GENOME REANNOTATION</scope>
    <source>
        <strain>cv. Columbia</strain>
    </source>
</reference>
<reference key="4">
    <citation type="journal article" date="2003" name="Science">
        <title>Empirical analysis of transcriptional activity in the Arabidopsis genome.</title>
        <authorList>
            <person name="Yamada K."/>
            <person name="Lim J."/>
            <person name="Dale J.M."/>
            <person name="Chen H."/>
            <person name="Shinn P."/>
            <person name="Palm C.J."/>
            <person name="Southwick A.M."/>
            <person name="Wu H.C."/>
            <person name="Kim C.J."/>
            <person name="Nguyen M."/>
            <person name="Pham P.K."/>
            <person name="Cheuk R.F."/>
            <person name="Karlin-Newmann G."/>
            <person name="Liu S.X."/>
            <person name="Lam B."/>
            <person name="Sakano H."/>
            <person name="Wu T."/>
            <person name="Yu G."/>
            <person name="Miranda M."/>
            <person name="Quach H.L."/>
            <person name="Tripp M."/>
            <person name="Chang C.H."/>
            <person name="Lee J.M."/>
            <person name="Toriumi M.J."/>
            <person name="Chan M.M."/>
            <person name="Tang C.C."/>
            <person name="Onodera C.S."/>
            <person name="Deng J.M."/>
            <person name="Akiyama K."/>
            <person name="Ansari Y."/>
            <person name="Arakawa T."/>
            <person name="Banh J."/>
            <person name="Banno F."/>
            <person name="Bowser L."/>
            <person name="Brooks S.Y."/>
            <person name="Carninci P."/>
            <person name="Chao Q."/>
            <person name="Choy N."/>
            <person name="Enju A."/>
            <person name="Goldsmith A.D."/>
            <person name="Gurjal M."/>
            <person name="Hansen N.F."/>
            <person name="Hayashizaki Y."/>
            <person name="Johnson-Hopson C."/>
            <person name="Hsuan V.W."/>
            <person name="Iida K."/>
            <person name="Karnes M."/>
            <person name="Khan S."/>
            <person name="Koesema E."/>
            <person name="Ishida J."/>
            <person name="Jiang P.X."/>
            <person name="Jones T."/>
            <person name="Kawai J."/>
            <person name="Kamiya A."/>
            <person name="Meyers C."/>
            <person name="Nakajima M."/>
            <person name="Narusaka M."/>
            <person name="Seki M."/>
            <person name="Sakurai T."/>
            <person name="Satou M."/>
            <person name="Tamse R."/>
            <person name="Vaysberg M."/>
            <person name="Wallender E.K."/>
            <person name="Wong C."/>
            <person name="Yamamura Y."/>
            <person name="Yuan S."/>
            <person name="Shinozaki K."/>
            <person name="Davis R.W."/>
            <person name="Theologis A."/>
            <person name="Ecker J.R."/>
        </authorList>
    </citation>
    <scope>NUCLEOTIDE SEQUENCE [LARGE SCALE MRNA] (ISOFORM 1)</scope>
    <source>
        <strain>cv. Columbia</strain>
    </source>
</reference>
<reference key="5">
    <citation type="submission" date="2006-07" db="EMBL/GenBank/DDBJ databases">
        <title>Large-scale analysis of RIKEN Arabidopsis full-length (RAFL) cDNAs.</title>
        <authorList>
            <person name="Totoki Y."/>
            <person name="Seki M."/>
            <person name="Ishida J."/>
            <person name="Nakajima M."/>
            <person name="Enju A."/>
            <person name="Kamiya A."/>
            <person name="Narusaka M."/>
            <person name="Shin-i T."/>
            <person name="Nakagawa M."/>
            <person name="Sakamoto N."/>
            <person name="Oishi K."/>
            <person name="Kohara Y."/>
            <person name="Kobayashi M."/>
            <person name="Toyoda A."/>
            <person name="Sakaki Y."/>
            <person name="Sakurai T."/>
            <person name="Iida K."/>
            <person name="Akiyama K."/>
            <person name="Satou M."/>
            <person name="Toyoda T."/>
            <person name="Konagaya A."/>
            <person name="Carninci P."/>
            <person name="Kawai J."/>
            <person name="Hayashizaki Y."/>
            <person name="Shinozaki K."/>
        </authorList>
    </citation>
    <scope>NUCLEOTIDE SEQUENCE [LARGE SCALE MRNA] (ISOFORM 2)</scope>
    <source>
        <strain>cv. Columbia</strain>
    </source>
</reference>
<reference key="6">
    <citation type="journal article" date="2001" name="J. Biol. Chem.">
        <title>Phylogenetic analysis of the UDP-glycosyltransferase multigene family of Arabidopsis thaliana.</title>
        <authorList>
            <person name="Li Y."/>
            <person name="Baldauf S."/>
            <person name="Lim E.K."/>
            <person name="Bowles D.J."/>
        </authorList>
    </citation>
    <scope>GENE FAMILY</scope>
</reference>
<reference key="7">
    <citation type="journal article" date="2004" name="Plant J.">
        <title>Arabidopsis glucosyltransferase UGT74B1 functions in glucosinolate biosynthesis and auxin homeostasis.</title>
        <authorList>
            <person name="Grubb C.D."/>
            <person name="Zipp B.J."/>
            <person name="Ludwig-Mueller J."/>
            <person name="Masuno M.N."/>
            <person name="Molinski T.F."/>
            <person name="Abel S."/>
        </authorList>
    </citation>
    <scope>FUNCTION</scope>
    <scope>CATALYTIC ACTIVITY</scope>
    <scope>TISSUE SPECIFICITY</scope>
    <scope>INDUCTION BY IAA</scope>
    <scope>BIOPHYSICOCHEMICAL PROPERTIES</scope>
    <scope>DISRUPTION PHENOTYPE</scope>
</reference>
<organism>
    <name type="scientific">Arabidopsis thaliana</name>
    <name type="common">Mouse-ear cress</name>
    <dbReference type="NCBI Taxonomy" id="3702"/>
    <lineage>
        <taxon>Eukaryota</taxon>
        <taxon>Viridiplantae</taxon>
        <taxon>Streptophyta</taxon>
        <taxon>Embryophyta</taxon>
        <taxon>Tracheophyta</taxon>
        <taxon>Spermatophyta</taxon>
        <taxon>Magnoliopsida</taxon>
        <taxon>eudicotyledons</taxon>
        <taxon>Gunneridae</taxon>
        <taxon>Pentapetalae</taxon>
        <taxon>rosids</taxon>
        <taxon>malvids</taxon>
        <taxon>Brassicales</taxon>
        <taxon>Brassicaceae</taxon>
        <taxon>Camelineae</taxon>
        <taxon>Arabidopsis</taxon>
    </lineage>
</organism>
<keyword id="KW-0025">Alternative splicing</keyword>
<keyword id="KW-0328">Glycosyltransferase</keyword>
<keyword id="KW-1185">Reference proteome</keyword>
<keyword id="KW-0808">Transferase</keyword>
<gene>
    <name type="primary">UGT74B1</name>
    <name type="ordered locus">At1g24100</name>
    <name type="ORF">F3I6.2</name>
</gene>
<dbReference type="EC" id="2.4.1.195" evidence="3"/>
<dbReference type="EMBL" id="KJ138987">
    <property type="protein sequence ID" value="AHL38927.1"/>
    <property type="molecule type" value="mRNA"/>
</dbReference>
<dbReference type="EMBL" id="AC002396">
    <property type="protein sequence ID" value="AAC00570.1"/>
    <property type="molecule type" value="Genomic_DNA"/>
</dbReference>
<dbReference type="EMBL" id="CP002684">
    <property type="protein sequence ID" value="AEE30478.1"/>
    <property type="molecule type" value="Genomic_DNA"/>
</dbReference>
<dbReference type="EMBL" id="BT001160">
    <property type="protein sequence ID" value="AAN65047.1"/>
    <property type="molecule type" value="mRNA"/>
</dbReference>
<dbReference type="EMBL" id="AF387008">
    <property type="protein sequence ID" value="AAK62453.1"/>
    <property type="molecule type" value="mRNA"/>
</dbReference>
<dbReference type="EMBL" id="AK230264">
    <property type="protein sequence ID" value="BAF02066.1"/>
    <property type="molecule type" value="mRNA"/>
</dbReference>
<dbReference type="PIR" id="T00639">
    <property type="entry name" value="T00639"/>
</dbReference>
<dbReference type="RefSeq" id="NP_173820.1">
    <molecule id="O48676-1"/>
    <property type="nucleotide sequence ID" value="NM_102256.3"/>
</dbReference>
<dbReference type="SMR" id="O48676"/>
<dbReference type="FunCoup" id="O48676">
    <property type="interactions" value="209"/>
</dbReference>
<dbReference type="STRING" id="3702.O48676"/>
<dbReference type="CAZy" id="GT1">
    <property type="family name" value="Glycosyltransferase Family 1"/>
</dbReference>
<dbReference type="iPTMnet" id="O48676"/>
<dbReference type="PaxDb" id="3702-AT1G24100.1"/>
<dbReference type="ProteomicsDB" id="242609">
    <molecule id="O48676-1"/>
</dbReference>
<dbReference type="EnsemblPlants" id="AT1G24100.1">
    <molecule id="O48676-1"/>
    <property type="protein sequence ID" value="AT1G24100.1"/>
    <property type="gene ID" value="AT1G24100"/>
</dbReference>
<dbReference type="GeneID" id="839022"/>
<dbReference type="Gramene" id="AT1G24100.1">
    <molecule id="O48676-1"/>
    <property type="protein sequence ID" value="AT1G24100.1"/>
    <property type="gene ID" value="AT1G24100"/>
</dbReference>
<dbReference type="KEGG" id="ath:AT1G24100"/>
<dbReference type="Araport" id="AT1G24100"/>
<dbReference type="TAIR" id="AT1G24100">
    <property type="gene designation" value="UGT74B1"/>
</dbReference>
<dbReference type="eggNOG" id="KOG1192">
    <property type="taxonomic scope" value="Eukaryota"/>
</dbReference>
<dbReference type="HOGENOM" id="CLU_001724_0_1_1"/>
<dbReference type="InParanoid" id="O48676"/>
<dbReference type="OMA" id="WKVGYRA"/>
<dbReference type="PhylomeDB" id="O48676"/>
<dbReference type="BioCyc" id="ARA:MONOMER-6102"/>
<dbReference type="BioCyc" id="MetaCyc:AT1G24100-MONOMER"/>
<dbReference type="PRO" id="PR:O48676"/>
<dbReference type="Proteomes" id="UP000006548">
    <property type="component" value="Chromosome 1"/>
</dbReference>
<dbReference type="ExpressionAtlas" id="O48676">
    <property type="expression patterns" value="baseline and differential"/>
</dbReference>
<dbReference type="GO" id="GO:0005829">
    <property type="term" value="C:cytosol"/>
    <property type="evidence" value="ECO:0007005"/>
    <property type="project" value="TAIR"/>
</dbReference>
<dbReference type="GO" id="GO:0005634">
    <property type="term" value="C:nucleus"/>
    <property type="evidence" value="ECO:0007005"/>
    <property type="project" value="TAIR"/>
</dbReference>
<dbReference type="GO" id="GO:0047251">
    <property type="term" value="F:thiohydroximate beta-D-glucosyltransferase activity"/>
    <property type="evidence" value="ECO:0000314"/>
    <property type="project" value="TAIR"/>
</dbReference>
<dbReference type="GO" id="GO:0052544">
    <property type="term" value="P:defense response by callose deposition in cell wall"/>
    <property type="evidence" value="ECO:0000315"/>
    <property type="project" value="TAIR"/>
</dbReference>
<dbReference type="GO" id="GO:0042742">
    <property type="term" value="P:defense response to bacterium"/>
    <property type="evidence" value="ECO:0000315"/>
    <property type="project" value="TAIR"/>
</dbReference>
<dbReference type="GO" id="GO:0019761">
    <property type="term" value="P:glucosinolate biosynthetic process"/>
    <property type="evidence" value="ECO:0000315"/>
    <property type="project" value="TAIR"/>
</dbReference>
<dbReference type="CDD" id="cd03784">
    <property type="entry name" value="GT1_Gtf-like"/>
    <property type="match status" value="1"/>
</dbReference>
<dbReference type="FunFam" id="3.40.50.2000:FF:000019">
    <property type="entry name" value="Glycosyltransferase"/>
    <property type="match status" value="1"/>
</dbReference>
<dbReference type="Gene3D" id="3.40.50.2000">
    <property type="entry name" value="Glycogen Phosphorylase B"/>
    <property type="match status" value="2"/>
</dbReference>
<dbReference type="InterPro" id="IPR002213">
    <property type="entry name" value="UDP_glucos_trans"/>
</dbReference>
<dbReference type="InterPro" id="IPR035595">
    <property type="entry name" value="UDP_glycos_trans_CS"/>
</dbReference>
<dbReference type="PANTHER" id="PTHR11926">
    <property type="entry name" value="GLUCOSYL/GLUCURONOSYL TRANSFERASES"/>
    <property type="match status" value="1"/>
</dbReference>
<dbReference type="PANTHER" id="PTHR11926:SF727">
    <property type="entry name" value="UDP-GLYCOSYLTRANSFERASE 74B1"/>
    <property type="match status" value="1"/>
</dbReference>
<dbReference type="Pfam" id="PF00201">
    <property type="entry name" value="UDPGT"/>
    <property type="match status" value="1"/>
</dbReference>
<dbReference type="SUPFAM" id="SSF53756">
    <property type="entry name" value="UDP-Glycosyltransferase/glycogen phosphorylase"/>
    <property type="match status" value="1"/>
</dbReference>
<dbReference type="PROSITE" id="PS00375">
    <property type="entry name" value="UDPGT"/>
    <property type="match status" value="1"/>
</dbReference>
<name>U74B1_ARATH</name>
<feature type="chain" id="PRO_0000287670" description="UDP-glycosyltransferase 74B1">
    <location>
        <begin position="1"/>
        <end position="460"/>
    </location>
</feature>
<feature type="active site" description="Proton acceptor" evidence="1">
    <location>
        <position position="22"/>
    </location>
</feature>
<feature type="active site" description="Charge relay" evidence="1">
    <location>
        <position position="113"/>
    </location>
</feature>
<feature type="binding site" evidence="2">
    <location>
        <position position="22"/>
    </location>
    <ligand>
        <name>an anthocyanidin</name>
        <dbReference type="ChEBI" id="CHEBI:143576"/>
    </ligand>
</feature>
<feature type="binding site" evidence="1">
    <location>
        <position position="135"/>
    </location>
    <ligand>
        <name>UDP-alpha-D-glucose</name>
        <dbReference type="ChEBI" id="CHEBI:58885"/>
    </ligand>
</feature>
<feature type="binding site" evidence="1">
    <location>
        <position position="339"/>
    </location>
    <ligand>
        <name>UDP-alpha-D-glucose</name>
        <dbReference type="ChEBI" id="CHEBI:58885"/>
    </ligand>
</feature>
<feature type="binding site" evidence="1">
    <location>
        <position position="354"/>
    </location>
    <ligand>
        <name>UDP-alpha-D-glucose</name>
        <dbReference type="ChEBI" id="CHEBI:58885"/>
    </ligand>
</feature>
<feature type="binding site" evidence="1">
    <location>
        <position position="357"/>
    </location>
    <ligand>
        <name>UDP-alpha-D-glucose</name>
        <dbReference type="ChEBI" id="CHEBI:58885"/>
    </ligand>
</feature>
<feature type="binding site" evidence="1">
    <location>
        <position position="358"/>
    </location>
    <ligand>
        <name>UDP-alpha-D-glucose</name>
        <dbReference type="ChEBI" id="CHEBI:58885"/>
    </ligand>
</feature>
<feature type="binding site" evidence="1">
    <location>
        <position position="359"/>
    </location>
    <ligand>
        <name>UDP-alpha-D-glucose</name>
        <dbReference type="ChEBI" id="CHEBI:58885"/>
    </ligand>
</feature>
<feature type="binding site" evidence="1">
    <location>
        <position position="362"/>
    </location>
    <ligand>
        <name>UDP-alpha-D-glucose</name>
        <dbReference type="ChEBI" id="CHEBI:58885"/>
    </ligand>
</feature>
<feature type="binding site" evidence="1">
    <location>
        <position position="378"/>
    </location>
    <ligand>
        <name>UDP-alpha-D-glucose</name>
        <dbReference type="ChEBI" id="CHEBI:58885"/>
    </ligand>
</feature>
<feature type="binding site" evidence="1">
    <location>
        <position position="379"/>
    </location>
    <ligand>
        <name>UDP-alpha-D-glucose</name>
        <dbReference type="ChEBI" id="CHEBI:58885"/>
    </ligand>
</feature>
<feature type="splice variant" id="VSP_025589" description="In isoform 2." evidence="4">
    <location>
        <begin position="144"/>
        <end position="363"/>
    </location>
</feature>
<accession>O48676</accession>
<accession>Q0WLE1</accession>
<accession>W8PVB1</accession>
<comment type="function">
    <text evidence="3">Involved in the biosynthesis of glucosinolate. In in vitro assay, may use phenylacetothiohydroximate (PATH), but not phenylacetic acid (PAA), indole-3-acetic acid (IAA) or salicylic acid (SA) as substrate. Specific for the thiohydroximate functional group and does not glucosylate the carboxylate group or a hydroxyl group.</text>
</comment>
<comment type="catalytic activity">
    <reaction evidence="3">
        <text>(Z)-2-phenyl-1-thioacetohydroximate + UDP-alpha-D-glucose = (Z)-desulfoglucotropeolin + UDP</text>
        <dbReference type="Rhea" id="RHEA:13757"/>
        <dbReference type="ChEBI" id="CHEBI:58176"/>
        <dbReference type="ChEBI" id="CHEBI:58223"/>
        <dbReference type="ChEBI" id="CHEBI:58885"/>
        <dbReference type="ChEBI" id="CHEBI:136422"/>
        <dbReference type="EC" id="2.4.1.195"/>
    </reaction>
</comment>
<comment type="catalytic activity">
    <reaction evidence="3">
        <text>a (Z)-omega-(methylsulfanyl)alkyl-thiohydroximate + UDP-alpha-D-glucose = an aliphatic (Z)-desulfo-glucosinolate + UDP</text>
        <dbReference type="Rhea" id="RHEA:52148"/>
        <dbReference type="Rhea" id="RHEA-COMP:17746"/>
        <dbReference type="Rhea" id="RHEA-COMP:18240"/>
        <dbReference type="ChEBI" id="CHEBI:58223"/>
        <dbReference type="ChEBI" id="CHEBI:58885"/>
        <dbReference type="ChEBI" id="CHEBI:187900"/>
        <dbReference type="ChEBI" id="CHEBI:192830"/>
        <dbReference type="EC" id="2.4.1.195"/>
    </reaction>
</comment>
<comment type="catalytic activity">
    <reaction evidence="3">
        <text>(Z)-2-(indol-3-yl)-1-thioacetohydroximate + UDP-alpha-D-glucose = (Z)-indolylmethyl desulfoglucosinolate + UDP</text>
        <dbReference type="Rhea" id="RHEA:52152"/>
        <dbReference type="ChEBI" id="CHEBI:58223"/>
        <dbReference type="ChEBI" id="CHEBI:58885"/>
        <dbReference type="ChEBI" id="CHEBI:136527"/>
        <dbReference type="ChEBI" id="CHEBI:187899"/>
        <dbReference type="EC" id="2.4.1.195"/>
    </reaction>
</comment>
<comment type="biophysicochemical properties">
    <kinetics>
        <KM evidence="3">5.8 uM for PATH</KM>
        <KM evidence="3">48 uM for UDP-glucose</KM>
    </kinetics>
    <phDependence>
        <text evidence="3">Optimum pH is 6. Stable between pH 5-9.</text>
    </phDependence>
</comment>
<comment type="alternative products">
    <event type="alternative splicing"/>
    <isoform>
        <id>O48676-1</id>
        <name>1</name>
        <sequence type="displayed"/>
    </isoform>
    <isoform>
        <id>O48676-2</id>
        <name>2</name>
        <sequence type="described" ref="VSP_025589"/>
    </isoform>
</comment>
<comment type="tissue specificity">
    <text evidence="3">Expressed in the vasculature, the apical meristems of roots, shoots and inflorescence, and the junction of organ or branches.</text>
</comment>
<comment type="induction">
    <text evidence="3">By high IAA concentration.</text>
</comment>
<comment type="disruption phenotype">
    <text evidence="3">Plants are severely dwarfed, partially sterile and display decreased glucosinolate levels and increased IAA concentrations.</text>
</comment>
<comment type="similarity">
    <text evidence="5">Belongs to the UDP-glycosyltransferase family.</text>
</comment>
<sequence length="460" mass="51002">MAETTPKVKGHVVILPYPVQGHLNPMVQFAKRLVSKNVKVTIATTTYTASSITTPSLSVEPISDGFDFIPIGIPGFSVDTYSESFKLNGSETLTLLIEKFKSTDSPIDCLIYDSFLPWGLEVARSMELSAASFFTNNLTVCSVLRKFSNGDFPLPADPNSAPFRIRGLPSLSYDELPSFVGRHWLTHPEHGRVLLNQFPNHENADWLFVNGFEGLEETQDCENGESDAMKATLIGPMIPSAYLDDRMEDDKDYGASLLKPISKECMEWLETKQAQSVAFVSFGSFGILFEKQLAEVAIALQESDLNFLWVIKEAHIAKLPEGFVESTKDRALLVSWCNQLEVLAHESIGCFLTHCGWNSTLEGLSLGVPMVGVPQWSDQMNDAKFVEEVWKVGYRAKEEAGEVIVKSEELVRCLKGVMEGESSVKIRESSKKWKDLAVKAMSEGGSSDRSINEFIESLGK</sequence>
<proteinExistence type="evidence at protein level"/>